<accession>Q5LXV4</accession>
<proteinExistence type="inferred from homology"/>
<feature type="chain" id="PRO_0000067815" description="DNA-directed RNA polymerase subunit beta'">
    <location>
        <begin position="1"/>
        <end position="1212"/>
    </location>
</feature>
<feature type="binding site" evidence="1">
    <location>
        <position position="60"/>
    </location>
    <ligand>
        <name>Zn(2+)</name>
        <dbReference type="ChEBI" id="CHEBI:29105"/>
        <label>1</label>
    </ligand>
</feature>
<feature type="binding site" evidence="1">
    <location>
        <position position="62"/>
    </location>
    <ligand>
        <name>Zn(2+)</name>
        <dbReference type="ChEBI" id="CHEBI:29105"/>
        <label>1</label>
    </ligand>
</feature>
<feature type="binding site" evidence="1">
    <location>
        <position position="75"/>
    </location>
    <ligand>
        <name>Zn(2+)</name>
        <dbReference type="ChEBI" id="CHEBI:29105"/>
        <label>1</label>
    </ligand>
</feature>
<feature type="binding site" evidence="1">
    <location>
        <position position="78"/>
    </location>
    <ligand>
        <name>Zn(2+)</name>
        <dbReference type="ChEBI" id="CHEBI:29105"/>
        <label>1</label>
    </ligand>
</feature>
<feature type="binding site" evidence="1">
    <location>
        <position position="450"/>
    </location>
    <ligand>
        <name>Mg(2+)</name>
        <dbReference type="ChEBI" id="CHEBI:18420"/>
    </ligand>
</feature>
<feature type="binding site" evidence="1">
    <location>
        <position position="452"/>
    </location>
    <ligand>
        <name>Mg(2+)</name>
        <dbReference type="ChEBI" id="CHEBI:18420"/>
    </ligand>
</feature>
<feature type="binding site" evidence="1">
    <location>
        <position position="454"/>
    </location>
    <ligand>
        <name>Mg(2+)</name>
        <dbReference type="ChEBI" id="CHEBI:18420"/>
    </ligand>
</feature>
<feature type="binding site" evidence="1">
    <location>
        <position position="819"/>
    </location>
    <ligand>
        <name>Zn(2+)</name>
        <dbReference type="ChEBI" id="CHEBI:29105"/>
        <label>2</label>
    </ligand>
</feature>
<feature type="binding site" evidence="1">
    <location>
        <position position="893"/>
    </location>
    <ligand>
        <name>Zn(2+)</name>
        <dbReference type="ChEBI" id="CHEBI:29105"/>
        <label>2</label>
    </ligand>
</feature>
<feature type="binding site" evidence="1">
    <location>
        <position position="900"/>
    </location>
    <ligand>
        <name>Zn(2+)</name>
        <dbReference type="ChEBI" id="CHEBI:29105"/>
        <label>2</label>
    </ligand>
</feature>
<feature type="binding site" evidence="1">
    <location>
        <position position="903"/>
    </location>
    <ligand>
        <name>Zn(2+)</name>
        <dbReference type="ChEBI" id="CHEBI:29105"/>
        <label>2</label>
    </ligand>
</feature>
<comment type="function">
    <text evidence="1">DNA-dependent RNA polymerase catalyzes the transcription of DNA into RNA using the four ribonucleoside triphosphates as substrates.</text>
</comment>
<comment type="catalytic activity">
    <reaction evidence="1">
        <text>RNA(n) + a ribonucleoside 5'-triphosphate = RNA(n+1) + diphosphate</text>
        <dbReference type="Rhea" id="RHEA:21248"/>
        <dbReference type="Rhea" id="RHEA-COMP:14527"/>
        <dbReference type="Rhea" id="RHEA-COMP:17342"/>
        <dbReference type="ChEBI" id="CHEBI:33019"/>
        <dbReference type="ChEBI" id="CHEBI:61557"/>
        <dbReference type="ChEBI" id="CHEBI:140395"/>
        <dbReference type="EC" id="2.7.7.6"/>
    </reaction>
</comment>
<comment type="cofactor">
    <cofactor evidence="1">
        <name>Mg(2+)</name>
        <dbReference type="ChEBI" id="CHEBI:18420"/>
    </cofactor>
    <text evidence="1">Binds 1 Mg(2+) ion per subunit.</text>
</comment>
<comment type="cofactor">
    <cofactor evidence="1">
        <name>Zn(2+)</name>
        <dbReference type="ChEBI" id="CHEBI:29105"/>
    </cofactor>
    <text evidence="1">Binds 2 Zn(2+) ions per subunit.</text>
</comment>
<comment type="subunit">
    <text evidence="1">The RNAP catalytic core consists of 2 alpha, 1 beta, 1 beta' and 1 omega subunit. When a sigma factor is associated with the core the holoenzyme is formed, which can initiate transcription.</text>
</comment>
<comment type="similarity">
    <text evidence="1">Belongs to the RNA polymerase beta' chain family.</text>
</comment>
<gene>
    <name evidence="1" type="primary">rpoC</name>
    <name type="ordered locus">str1867</name>
</gene>
<reference key="1">
    <citation type="journal article" date="2004" name="Nat. Biotechnol.">
        <title>Complete sequence and comparative genome analysis of the dairy bacterium Streptococcus thermophilus.</title>
        <authorList>
            <person name="Bolotin A."/>
            <person name="Quinquis B."/>
            <person name="Renault P."/>
            <person name="Sorokin A."/>
            <person name="Ehrlich S.D."/>
            <person name="Kulakauskas S."/>
            <person name="Lapidus A."/>
            <person name="Goltsman E."/>
            <person name="Mazur M."/>
            <person name="Pusch G.D."/>
            <person name="Fonstein M."/>
            <person name="Overbeek R."/>
            <person name="Kyprides N."/>
            <person name="Purnelle B."/>
            <person name="Prozzi D."/>
            <person name="Ngui K."/>
            <person name="Masuy D."/>
            <person name="Hancy F."/>
            <person name="Burteau S."/>
            <person name="Boutry M."/>
            <person name="Delcour J."/>
            <person name="Goffeau A."/>
            <person name="Hols P."/>
        </authorList>
    </citation>
    <scope>NUCLEOTIDE SEQUENCE [LARGE SCALE GENOMIC DNA]</scope>
    <source>
        <strain>CNRZ 1066</strain>
    </source>
</reference>
<organism>
    <name type="scientific">Streptococcus thermophilus (strain CNRZ 1066)</name>
    <dbReference type="NCBI Taxonomy" id="299768"/>
    <lineage>
        <taxon>Bacteria</taxon>
        <taxon>Bacillati</taxon>
        <taxon>Bacillota</taxon>
        <taxon>Bacilli</taxon>
        <taxon>Lactobacillales</taxon>
        <taxon>Streptococcaceae</taxon>
        <taxon>Streptococcus</taxon>
    </lineage>
</organism>
<sequence length="1212" mass="135330">MVDVNRFKSMQITLASPTKVRSWSYGEVKKPETINYRTLKPEREGLFDEVIFGPTKDWECACGKYKRIRYKGIVCDRCGVEVTRAKVRRERMGHIELKAPVSHIWYFKGIPSRMGLTLDMSPRALEEVIYFAAYVVIDPKETPLERKSLLTEREYREKLQEYGQGSFVAKMGAEAIQDLLKQVDLEAEIAELKEELKTATGQKRFKAVRRLDVLDAFYKSGNKPEWMVLNILPVLPPDLRPMVQLDGGRFAASDLNDLYRRVINRNNRLARLLELGAPGIIVQNEKRMLQEAVDALIDNGRRGRPITGPGSRPLKSLSHMLKGKQGRFRQNLLGKRVDFSGRSVIAVGPTLKMYQCGVPRLMAIELFKPFVMREIVAREYAGNVKAAKRMVERGDERIWDILEDVIKEHPVLLNRAPTLHRLGIQAFEPVLIDGKALRLHPLVCEAYNADFDGDQMAIHVPLSEEAQAEARLLLLAAEHILNPKDGKPVVTPSQDMVLGNYYLTMEDEGREGEGMIFKDIDEAVMAYHNGYVHLHSRVGIAVDSMPDKPWKENQLHKILVTTVGKILFNSIIPSEIPYLQETTNENLTDSTPDKYFLEPGQDIQTVIDSLEINAPFKKKHLGNIIAEIFKRLRTTETSAFLDRLKDLGYYYSTLAGLTVGIADIPVIDNKQEIIDAAHHRVEEINKAFRRGLMTEDDRYVAVTTTWREAKDALEKRLIETQDPKNPIVMMMDSGARGNISNFSQLAGMRGLMAAPNGRIMELPILSNFREGLSVLEMFFSTHGARKGMTDTALKTADSGYLTRRLVDVAQDVIIREDDCGTDRGLVIRAITDGKEVTETLEERLFGRYTKKSVKHPETGEVIVGPDTLITEDMAAAIVNAGVEEVTIRSVFTCKTRHGVCRHCYGINLATGDAVEVGEAVGTIAAQSIGEPGTQLTMRTFHTGGVASNTDITQGLPRIQEIFEARNPKGEAVITEVKGTVIEIEEDAATRTKKVFVQGKTGMGEYVVPFTARMKVEVGDEVHRGEALTEGSIQPKRLLEVRDTLSVETYLLAEVQKVYRSQGVEIGDKHVEVMVRQMLRKVRVMDPGDTDLLPGTLMDISDFTDANKDIVISGGVPATSRPVLLGITKASLETNSFLSAASFQETTRVLTDAAIRGKKDHLIGLKENVIIGKIIPAGTGMARYRNIEPLAVNEVEVIENIAVDEAIVESSED</sequence>
<dbReference type="EC" id="2.7.7.6" evidence="1"/>
<dbReference type="EMBL" id="CP000024">
    <property type="protein sequence ID" value="AAV63381.1"/>
    <property type="molecule type" value="Genomic_DNA"/>
</dbReference>
<dbReference type="RefSeq" id="WP_011226631.1">
    <property type="nucleotide sequence ID" value="NC_006449.1"/>
</dbReference>
<dbReference type="SMR" id="Q5LXV4"/>
<dbReference type="GeneID" id="66899599"/>
<dbReference type="KEGG" id="stc:str1867"/>
<dbReference type="HOGENOM" id="CLU_000524_3_1_9"/>
<dbReference type="GO" id="GO:0000428">
    <property type="term" value="C:DNA-directed RNA polymerase complex"/>
    <property type="evidence" value="ECO:0007669"/>
    <property type="project" value="UniProtKB-KW"/>
</dbReference>
<dbReference type="GO" id="GO:0003677">
    <property type="term" value="F:DNA binding"/>
    <property type="evidence" value="ECO:0007669"/>
    <property type="project" value="UniProtKB-UniRule"/>
</dbReference>
<dbReference type="GO" id="GO:0003899">
    <property type="term" value="F:DNA-directed RNA polymerase activity"/>
    <property type="evidence" value="ECO:0007669"/>
    <property type="project" value="UniProtKB-UniRule"/>
</dbReference>
<dbReference type="GO" id="GO:0000287">
    <property type="term" value="F:magnesium ion binding"/>
    <property type="evidence" value="ECO:0007669"/>
    <property type="project" value="UniProtKB-UniRule"/>
</dbReference>
<dbReference type="GO" id="GO:0008270">
    <property type="term" value="F:zinc ion binding"/>
    <property type="evidence" value="ECO:0007669"/>
    <property type="project" value="UniProtKB-UniRule"/>
</dbReference>
<dbReference type="GO" id="GO:0006351">
    <property type="term" value="P:DNA-templated transcription"/>
    <property type="evidence" value="ECO:0007669"/>
    <property type="project" value="UniProtKB-UniRule"/>
</dbReference>
<dbReference type="CDD" id="cd02655">
    <property type="entry name" value="RNAP_beta'_C"/>
    <property type="match status" value="1"/>
</dbReference>
<dbReference type="CDD" id="cd01609">
    <property type="entry name" value="RNAP_beta'_N"/>
    <property type="match status" value="1"/>
</dbReference>
<dbReference type="FunFam" id="1.10.150.390:FF:000002">
    <property type="entry name" value="DNA-directed RNA polymerase subunit beta"/>
    <property type="match status" value="1"/>
</dbReference>
<dbReference type="FunFam" id="4.10.860.120:FF:000001">
    <property type="entry name" value="DNA-directed RNA polymerase subunit beta"/>
    <property type="match status" value="1"/>
</dbReference>
<dbReference type="Gene3D" id="1.10.132.30">
    <property type="match status" value="1"/>
</dbReference>
<dbReference type="Gene3D" id="1.10.150.390">
    <property type="match status" value="1"/>
</dbReference>
<dbReference type="Gene3D" id="1.10.1790.20">
    <property type="match status" value="1"/>
</dbReference>
<dbReference type="Gene3D" id="1.10.40.90">
    <property type="match status" value="1"/>
</dbReference>
<dbReference type="Gene3D" id="2.40.40.20">
    <property type="match status" value="1"/>
</dbReference>
<dbReference type="Gene3D" id="2.40.50.100">
    <property type="match status" value="1"/>
</dbReference>
<dbReference type="Gene3D" id="4.10.860.120">
    <property type="entry name" value="RNA polymerase II, clamp domain"/>
    <property type="match status" value="1"/>
</dbReference>
<dbReference type="Gene3D" id="1.10.274.100">
    <property type="entry name" value="RNA polymerase Rpb1, domain 3"/>
    <property type="match status" value="1"/>
</dbReference>
<dbReference type="HAMAP" id="MF_01322">
    <property type="entry name" value="RNApol_bact_RpoC"/>
    <property type="match status" value="1"/>
</dbReference>
<dbReference type="InterPro" id="IPR045867">
    <property type="entry name" value="DNA-dir_RpoC_beta_prime"/>
</dbReference>
<dbReference type="InterPro" id="IPR012754">
    <property type="entry name" value="DNA-dir_RpoC_beta_prime_bact"/>
</dbReference>
<dbReference type="InterPro" id="IPR000722">
    <property type="entry name" value="RNA_pol_asu"/>
</dbReference>
<dbReference type="InterPro" id="IPR006592">
    <property type="entry name" value="RNA_pol_N"/>
</dbReference>
<dbReference type="InterPro" id="IPR007080">
    <property type="entry name" value="RNA_pol_Rpb1_1"/>
</dbReference>
<dbReference type="InterPro" id="IPR007066">
    <property type="entry name" value="RNA_pol_Rpb1_3"/>
</dbReference>
<dbReference type="InterPro" id="IPR042102">
    <property type="entry name" value="RNA_pol_Rpb1_3_sf"/>
</dbReference>
<dbReference type="InterPro" id="IPR007083">
    <property type="entry name" value="RNA_pol_Rpb1_4"/>
</dbReference>
<dbReference type="InterPro" id="IPR007081">
    <property type="entry name" value="RNA_pol_Rpb1_5"/>
</dbReference>
<dbReference type="InterPro" id="IPR044893">
    <property type="entry name" value="RNA_pol_Rpb1_clamp_domain"/>
</dbReference>
<dbReference type="InterPro" id="IPR038120">
    <property type="entry name" value="Rpb1_funnel_sf"/>
</dbReference>
<dbReference type="NCBIfam" id="TIGR02386">
    <property type="entry name" value="rpoC_TIGR"/>
    <property type="match status" value="1"/>
</dbReference>
<dbReference type="PANTHER" id="PTHR19376">
    <property type="entry name" value="DNA-DIRECTED RNA POLYMERASE"/>
    <property type="match status" value="1"/>
</dbReference>
<dbReference type="PANTHER" id="PTHR19376:SF54">
    <property type="entry name" value="DNA-DIRECTED RNA POLYMERASE SUBUNIT BETA"/>
    <property type="match status" value="1"/>
</dbReference>
<dbReference type="Pfam" id="PF04997">
    <property type="entry name" value="RNA_pol_Rpb1_1"/>
    <property type="match status" value="1"/>
</dbReference>
<dbReference type="Pfam" id="PF00623">
    <property type="entry name" value="RNA_pol_Rpb1_2"/>
    <property type="match status" value="1"/>
</dbReference>
<dbReference type="Pfam" id="PF04983">
    <property type="entry name" value="RNA_pol_Rpb1_3"/>
    <property type="match status" value="1"/>
</dbReference>
<dbReference type="Pfam" id="PF05000">
    <property type="entry name" value="RNA_pol_Rpb1_4"/>
    <property type="match status" value="1"/>
</dbReference>
<dbReference type="Pfam" id="PF04998">
    <property type="entry name" value="RNA_pol_Rpb1_5"/>
    <property type="match status" value="1"/>
</dbReference>
<dbReference type="SMART" id="SM00663">
    <property type="entry name" value="RPOLA_N"/>
    <property type="match status" value="1"/>
</dbReference>
<dbReference type="SUPFAM" id="SSF64484">
    <property type="entry name" value="beta and beta-prime subunits of DNA dependent RNA-polymerase"/>
    <property type="match status" value="1"/>
</dbReference>
<keyword id="KW-0240">DNA-directed RNA polymerase</keyword>
<keyword id="KW-0460">Magnesium</keyword>
<keyword id="KW-0479">Metal-binding</keyword>
<keyword id="KW-0548">Nucleotidyltransferase</keyword>
<keyword id="KW-0804">Transcription</keyword>
<keyword id="KW-0808">Transferase</keyword>
<keyword id="KW-0862">Zinc</keyword>
<evidence type="ECO:0000255" key="1">
    <source>
        <dbReference type="HAMAP-Rule" id="MF_01322"/>
    </source>
</evidence>
<name>RPOC_STRT1</name>
<protein>
    <recommendedName>
        <fullName evidence="1">DNA-directed RNA polymerase subunit beta'</fullName>
        <shortName evidence="1">RNAP subunit beta'</shortName>
        <ecNumber evidence="1">2.7.7.6</ecNumber>
    </recommendedName>
    <alternativeName>
        <fullName evidence="1">RNA polymerase subunit beta'</fullName>
    </alternativeName>
    <alternativeName>
        <fullName evidence="1">Transcriptase subunit beta'</fullName>
    </alternativeName>
</protein>